<protein>
    <recommendedName>
        <fullName>Protein FAM90A19</fullName>
    </recommendedName>
</protein>
<comment type="similarity">
    <text evidence="2">Belongs to the FAM90 family.</text>
</comment>
<keyword id="KW-1185">Reference proteome</keyword>
<proteinExistence type="inferred from homology"/>
<gene>
    <name evidence="3" type="primary">FAM90A19</name>
    <name evidence="3" type="synonym">FAM90A19P</name>
</gene>
<reference key="1">
    <citation type="journal article" date="2006" name="Nature">
        <title>DNA sequence and analysis of human chromosome 8.</title>
        <authorList>
            <person name="Nusbaum C."/>
            <person name="Mikkelsen T.S."/>
            <person name="Zody M.C."/>
            <person name="Asakawa S."/>
            <person name="Taudien S."/>
            <person name="Garber M."/>
            <person name="Kodira C.D."/>
            <person name="Schueler M.G."/>
            <person name="Shimizu A."/>
            <person name="Whittaker C.A."/>
            <person name="Chang J.L."/>
            <person name="Cuomo C.A."/>
            <person name="Dewar K."/>
            <person name="FitzGerald M.G."/>
            <person name="Yang X."/>
            <person name="Allen N.R."/>
            <person name="Anderson S."/>
            <person name="Asakawa T."/>
            <person name="Blechschmidt K."/>
            <person name="Bloom T."/>
            <person name="Borowsky M.L."/>
            <person name="Butler J."/>
            <person name="Cook A."/>
            <person name="Corum B."/>
            <person name="DeArellano K."/>
            <person name="DeCaprio D."/>
            <person name="Dooley K.T."/>
            <person name="Dorris L. III"/>
            <person name="Engels R."/>
            <person name="Gloeckner G."/>
            <person name="Hafez N."/>
            <person name="Hagopian D.S."/>
            <person name="Hall J.L."/>
            <person name="Ishikawa S.K."/>
            <person name="Jaffe D.B."/>
            <person name="Kamat A."/>
            <person name="Kudoh J."/>
            <person name="Lehmann R."/>
            <person name="Lokitsang T."/>
            <person name="Macdonald P."/>
            <person name="Major J.E."/>
            <person name="Matthews C.D."/>
            <person name="Mauceli E."/>
            <person name="Menzel U."/>
            <person name="Mihalev A.H."/>
            <person name="Minoshima S."/>
            <person name="Murayama Y."/>
            <person name="Naylor J.W."/>
            <person name="Nicol R."/>
            <person name="Nguyen C."/>
            <person name="O'Leary S.B."/>
            <person name="O'Neill K."/>
            <person name="Parker S.C.J."/>
            <person name="Polley A."/>
            <person name="Raymond C.K."/>
            <person name="Reichwald K."/>
            <person name="Rodriguez J."/>
            <person name="Sasaki T."/>
            <person name="Schilhabel M."/>
            <person name="Siddiqui R."/>
            <person name="Smith C.L."/>
            <person name="Sneddon T.P."/>
            <person name="Talamas J.A."/>
            <person name="Tenzin P."/>
            <person name="Topham K."/>
            <person name="Venkataraman V."/>
            <person name="Wen G."/>
            <person name="Yamazaki S."/>
            <person name="Young S.K."/>
            <person name="Zeng Q."/>
            <person name="Zimmer A.R."/>
            <person name="Rosenthal A."/>
            <person name="Birren B.W."/>
            <person name="Platzer M."/>
            <person name="Shimizu N."/>
            <person name="Lander E.S."/>
        </authorList>
    </citation>
    <scope>NUCLEOTIDE SEQUENCE [LARGE SCALE GENOMIC DNA]</scope>
</reference>
<feature type="chain" id="PRO_0000455515" description="Protein FAM90A19">
    <location>
        <begin position="1"/>
        <end position="464"/>
    </location>
</feature>
<feature type="region of interest" description="Disordered" evidence="1">
    <location>
        <begin position="1"/>
        <end position="42"/>
    </location>
</feature>
<feature type="region of interest" description="Disordered" evidence="1">
    <location>
        <begin position="70"/>
        <end position="387"/>
    </location>
</feature>
<feature type="region of interest" description="Disordered" evidence="1">
    <location>
        <begin position="415"/>
        <end position="437"/>
    </location>
</feature>
<feature type="compositionally biased region" description="Basic and acidic residues" evidence="1">
    <location>
        <begin position="74"/>
        <end position="89"/>
    </location>
</feature>
<feature type="compositionally biased region" description="Basic and acidic residues" evidence="1">
    <location>
        <begin position="97"/>
        <end position="114"/>
    </location>
</feature>
<feature type="compositionally biased region" description="Low complexity" evidence="1">
    <location>
        <begin position="180"/>
        <end position="197"/>
    </location>
</feature>
<dbReference type="EMBL" id="AC084121">
    <property type="status" value="NOT_ANNOTATED_CDS"/>
    <property type="molecule type" value="Genomic_DNA"/>
</dbReference>
<dbReference type="RefSeq" id="NP_001157921.1">
    <property type="nucleotide sequence ID" value="NM_001164449.1"/>
</dbReference>
<dbReference type="SMR" id="P0DV76"/>
<dbReference type="Ensembl" id="ENST00000647903.1">
    <property type="protein sequence ID" value="ENSP00000497020.1"/>
    <property type="gene ID" value="ENSG00000285657.1"/>
</dbReference>
<dbReference type="GeneID" id="728753"/>
<dbReference type="MANE-Select" id="ENST00000647903.1">
    <property type="protein sequence ID" value="ENSP00000497020.1"/>
    <property type="RefSeq nucleotide sequence ID" value="NM_001164449.1"/>
    <property type="RefSeq protein sequence ID" value="NP_001157921.1"/>
</dbReference>
<dbReference type="AGR" id="HGNC:32267"/>
<dbReference type="GeneCards" id="FAM90A19"/>
<dbReference type="HGNC" id="HGNC:32267">
    <property type="gene designation" value="FAM90A19"/>
</dbReference>
<dbReference type="HPA" id="ENSG00000285657">
    <property type="expression patterns" value="Not detected"/>
</dbReference>
<dbReference type="MIM" id="613053">
    <property type="type" value="gene"/>
</dbReference>
<dbReference type="GeneTree" id="ENSGT00910000144208"/>
<dbReference type="PRO" id="PR:P0DV76"/>
<dbReference type="Proteomes" id="UP000005640">
    <property type="component" value="Chromosome 8"/>
</dbReference>
<dbReference type="InterPro" id="IPR039213">
    <property type="entry name" value="FAM90"/>
</dbReference>
<dbReference type="InterPro" id="IPR041670">
    <property type="entry name" value="Znf-CCHC_6"/>
</dbReference>
<dbReference type="PANTHER" id="PTHR16035:SF14">
    <property type="entry name" value="FAMILY WITH SEQUENCE SIMILARITY 90 MEMBER A11, PSEUDOGENE-RELATED"/>
    <property type="match status" value="1"/>
</dbReference>
<dbReference type="PANTHER" id="PTHR16035">
    <property type="entry name" value="PROTEIN FAM90A1"/>
    <property type="match status" value="1"/>
</dbReference>
<dbReference type="Pfam" id="PF15288">
    <property type="entry name" value="zf-CCHC_6"/>
    <property type="match status" value="1"/>
</dbReference>
<sequence length="464" mass="49680">MMARRDPKSWAKRLVRAQTLQKQRRAPVGPRAPPPDEEDPRLKCKNCGAFGHTARSTRCPMKCWKAALVPATLGKKEGKENLKPWKPRVEANPGPLNKDKGEKEERPRQQDPQRKALLHMFSGKPPEKPLPNGKGSTESSDHLRVASGPMPVHTTSKRPRVDPVLADRSAAEMSGRGSVLASLSPLRKASLSSSSSLGPKERQTGAAADMPQPAVRHQGREPLLVVKPTHSSPEGGCREVPQAASKTHGLLQAARPQAQDKRPAVTSQPCPPAATHSLGLGSNLSFGPGAKRPAQAPIQACLKFPKKPRLGPFQIPESAIQGGELGAPGNLQPPPAATELGPSTSPQMGRRTPAQVPSVDWQPPHSTPCLPTAQACTMSHHSAASHDGAQPLRVLFRRLENGRWSSSLLAAPSFHSPEKPGAFLAQSPHVSEKSEAPCVRVPPSVLYEDLQVSSSSEDSDSDLE</sequence>
<accession>P0DV76</accession>
<accession>A6NE21</accession>
<name>F90AJ_HUMAN</name>
<evidence type="ECO:0000256" key="1">
    <source>
        <dbReference type="SAM" id="MobiDB-lite"/>
    </source>
</evidence>
<evidence type="ECO:0000305" key="2"/>
<evidence type="ECO:0000312" key="3">
    <source>
        <dbReference type="HGNC" id="HGNC:32267"/>
    </source>
</evidence>
<organism>
    <name type="scientific">Homo sapiens</name>
    <name type="common">Human</name>
    <dbReference type="NCBI Taxonomy" id="9606"/>
    <lineage>
        <taxon>Eukaryota</taxon>
        <taxon>Metazoa</taxon>
        <taxon>Chordata</taxon>
        <taxon>Craniata</taxon>
        <taxon>Vertebrata</taxon>
        <taxon>Euteleostomi</taxon>
        <taxon>Mammalia</taxon>
        <taxon>Eutheria</taxon>
        <taxon>Euarchontoglires</taxon>
        <taxon>Primates</taxon>
        <taxon>Haplorrhini</taxon>
        <taxon>Catarrhini</taxon>
        <taxon>Hominidae</taxon>
        <taxon>Homo</taxon>
    </lineage>
</organism>